<gene>
    <name evidence="1" type="primary">hisH</name>
    <name type="ordered locus">PAE0956</name>
</gene>
<sequence>MIVGVVDYTVGNIGSVLTALKRAGAVPVVVKGVEEAGRVDAVVLPGVGTYEAAYALARQFKEVVLEKPTLAICLGMQLLFESSEEGGGQGLGVFKGRVERIKARKVPNIGWRYTHVVKNSEIIAEGYYYYLHSYGVRWGENEAYTAYIKLEEKYVAAVERGHIIGVQFHPERSGRTGLELIKRFLAVAKR</sequence>
<comment type="function">
    <text evidence="1">IGPS catalyzes the conversion of PRFAR and glutamine to IGP, AICAR and glutamate. The HisH subunit catalyzes the hydrolysis of glutamine to glutamate and ammonia as part of the synthesis of IGP and AICAR. The resulting ammonia molecule is channeled to the active site of HisF.</text>
</comment>
<comment type="catalytic activity">
    <reaction evidence="1">
        <text>5-[(5-phospho-1-deoxy-D-ribulos-1-ylimino)methylamino]-1-(5-phospho-beta-D-ribosyl)imidazole-4-carboxamide + L-glutamine = D-erythro-1-(imidazol-4-yl)glycerol 3-phosphate + 5-amino-1-(5-phospho-beta-D-ribosyl)imidazole-4-carboxamide + L-glutamate + H(+)</text>
        <dbReference type="Rhea" id="RHEA:24793"/>
        <dbReference type="ChEBI" id="CHEBI:15378"/>
        <dbReference type="ChEBI" id="CHEBI:29985"/>
        <dbReference type="ChEBI" id="CHEBI:58278"/>
        <dbReference type="ChEBI" id="CHEBI:58359"/>
        <dbReference type="ChEBI" id="CHEBI:58475"/>
        <dbReference type="ChEBI" id="CHEBI:58525"/>
        <dbReference type="EC" id="4.3.2.10"/>
    </reaction>
</comment>
<comment type="catalytic activity">
    <reaction evidence="1">
        <text>L-glutamine + H2O = L-glutamate + NH4(+)</text>
        <dbReference type="Rhea" id="RHEA:15889"/>
        <dbReference type="ChEBI" id="CHEBI:15377"/>
        <dbReference type="ChEBI" id="CHEBI:28938"/>
        <dbReference type="ChEBI" id="CHEBI:29985"/>
        <dbReference type="ChEBI" id="CHEBI:58359"/>
        <dbReference type="EC" id="3.5.1.2"/>
    </reaction>
</comment>
<comment type="pathway">
    <text evidence="1">Amino-acid biosynthesis; L-histidine biosynthesis; L-histidine from 5-phospho-alpha-D-ribose 1-diphosphate: step 5/9.</text>
</comment>
<comment type="subunit">
    <text evidence="1">Heterodimer of HisH and HisF.</text>
</comment>
<comment type="subcellular location">
    <subcellularLocation>
        <location evidence="1">Cytoplasm</location>
    </subcellularLocation>
</comment>
<proteinExistence type="inferred from homology"/>
<reference key="1">
    <citation type="journal article" date="2002" name="Proc. Natl. Acad. Sci. U.S.A.">
        <title>Genome sequence of the hyperthermophilic crenarchaeon Pyrobaculum aerophilum.</title>
        <authorList>
            <person name="Fitz-Gibbon S.T."/>
            <person name="Ladner H."/>
            <person name="Kim U.-J."/>
            <person name="Stetter K.O."/>
            <person name="Simon M.I."/>
            <person name="Miller J.H."/>
        </authorList>
    </citation>
    <scope>NUCLEOTIDE SEQUENCE [LARGE SCALE GENOMIC DNA]</scope>
    <source>
        <strain>ATCC 51768 / DSM 7523 / JCM 9630 / CIP 104966 / NBRC 100827 / IM2</strain>
    </source>
</reference>
<organism>
    <name type="scientific">Pyrobaculum aerophilum (strain ATCC 51768 / DSM 7523 / JCM 9630 / CIP 104966 / NBRC 100827 / IM2)</name>
    <dbReference type="NCBI Taxonomy" id="178306"/>
    <lineage>
        <taxon>Archaea</taxon>
        <taxon>Thermoproteota</taxon>
        <taxon>Thermoprotei</taxon>
        <taxon>Thermoproteales</taxon>
        <taxon>Thermoproteaceae</taxon>
        <taxon>Pyrobaculum</taxon>
    </lineage>
</organism>
<protein>
    <recommendedName>
        <fullName evidence="1">Imidazole glycerol phosphate synthase subunit HisH</fullName>
        <ecNumber evidence="1">4.3.2.10</ecNumber>
    </recommendedName>
    <alternativeName>
        <fullName evidence="1">IGP synthase glutaminase subunit</fullName>
        <ecNumber evidence="1">3.5.1.2</ecNumber>
    </alternativeName>
    <alternativeName>
        <fullName evidence="1">IGP synthase subunit HisH</fullName>
    </alternativeName>
    <alternativeName>
        <fullName evidence="1">ImGP synthase subunit HisH</fullName>
        <shortName evidence="1">IGPS subunit HisH</shortName>
    </alternativeName>
</protein>
<name>HIS5_PYRAE</name>
<accession>Q8ZY40</accession>
<dbReference type="EC" id="4.3.2.10" evidence="1"/>
<dbReference type="EC" id="3.5.1.2" evidence="1"/>
<dbReference type="EMBL" id="AE009441">
    <property type="protein sequence ID" value="AAL63156.1"/>
    <property type="molecule type" value="Genomic_DNA"/>
</dbReference>
<dbReference type="RefSeq" id="WP_011007628.1">
    <property type="nucleotide sequence ID" value="NC_003364.1"/>
</dbReference>
<dbReference type="SMR" id="Q8ZY40"/>
<dbReference type="FunCoup" id="Q8ZY40">
    <property type="interactions" value="75"/>
</dbReference>
<dbReference type="STRING" id="178306.PAE0956"/>
<dbReference type="EnsemblBacteria" id="AAL63156">
    <property type="protein sequence ID" value="AAL63156"/>
    <property type="gene ID" value="PAE0956"/>
</dbReference>
<dbReference type="GeneID" id="1465391"/>
<dbReference type="KEGG" id="pai:PAE0956"/>
<dbReference type="PATRIC" id="fig|178306.9.peg.708"/>
<dbReference type="eggNOG" id="arCOG00089">
    <property type="taxonomic scope" value="Archaea"/>
</dbReference>
<dbReference type="HOGENOM" id="CLU_071837_2_2_2"/>
<dbReference type="InParanoid" id="Q8ZY40"/>
<dbReference type="BRENDA" id="4.3.2.10">
    <property type="organism ID" value="5239"/>
</dbReference>
<dbReference type="UniPathway" id="UPA00031">
    <property type="reaction ID" value="UER00010"/>
</dbReference>
<dbReference type="Proteomes" id="UP000002439">
    <property type="component" value="Chromosome"/>
</dbReference>
<dbReference type="GO" id="GO:0005737">
    <property type="term" value="C:cytoplasm"/>
    <property type="evidence" value="ECO:0007669"/>
    <property type="project" value="UniProtKB-SubCell"/>
</dbReference>
<dbReference type="GO" id="GO:0004359">
    <property type="term" value="F:glutaminase activity"/>
    <property type="evidence" value="ECO:0007669"/>
    <property type="project" value="UniProtKB-EC"/>
</dbReference>
<dbReference type="GO" id="GO:0000107">
    <property type="term" value="F:imidazoleglycerol-phosphate synthase activity"/>
    <property type="evidence" value="ECO:0000318"/>
    <property type="project" value="GO_Central"/>
</dbReference>
<dbReference type="GO" id="GO:0016829">
    <property type="term" value="F:lyase activity"/>
    <property type="evidence" value="ECO:0007669"/>
    <property type="project" value="UniProtKB-KW"/>
</dbReference>
<dbReference type="GO" id="GO:0000105">
    <property type="term" value="P:L-histidine biosynthetic process"/>
    <property type="evidence" value="ECO:0007669"/>
    <property type="project" value="UniProtKB-UniRule"/>
</dbReference>
<dbReference type="CDD" id="cd01748">
    <property type="entry name" value="GATase1_IGP_Synthase"/>
    <property type="match status" value="1"/>
</dbReference>
<dbReference type="Gene3D" id="3.40.50.880">
    <property type="match status" value="1"/>
</dbReference>
<dbReference type="HAMAP" id="MF_00278">
    <property type="entry name" value="HisH"/>
    <property type="match status" value="1"/>
</dbReference>
<dbReference type="InterPro" id="IPR029062">
    <property type="entry name" value="Class_I_gatase-like"/>
</dbReference>
<dbReference type="InterPro" id="IPR017926">
    <property type="entry name" value="GATASE"/>
</dbReference>
<dbReference type="InterPro" id="IPR010139">
    <property type="entry name" value="Imidazole-glycPsynth_HisH"/>
</dbReference>
<dbReference type="NCBIfam" id="TIGR01855">
    <property type="entry name" value="IMP_synth_hisH"/>
    <property type="match status" value="1"/>
</dbReference>
<dbReference type="PANTHER" id="PTHR42701">
    <property type="entry name" value="IMIDAZOLE GLYCEROL PHOSPHATE SYNTHASE SUBUNIT HISH"/>
    <property type="match status" value="1"/>
</dbReference>
<dbReference type="PANTHER" id="PTHR42701:SF1">
    <property type="entry name" value="IMIDAZOLE GLYCEROL PHOSPHATE SYNTHASE SUBUNIT HISH"/>
    <property type="match status" value="1"/>
</dbReference>
<dbReference type="Pfam" id="PF00117">
    <property type="entry name" value="GATase"/>
    <property type="match status" value="1"/>
</dbReference>
<dbReference type="PIRSF" id="PIRSF000495">
    <property type="entry name" value="Amidotransf_hisH"/>
    <property type="match status" value="1"/>
</dbReference>
<dbReference type="SUPFAM" id="SSF52317">
    <property type="entry name" value="Class I glutamine amidotransferase-like"/>
    <property type="match status" value="1"/>
</dbReference>
<dbReference type="PROSITE" id="PS51273">
    <property type="entry name" value="GATASE_TYPE_1"/>
    <property type="match status" value="1"/>
</dbReference>
<keyword id="KW-0028">Amino-acid biosynthesis</keyword>
<keyword id="KW-0963">Cytoplasm</keyword>
<keyword id="KW-0315">Glutamine amidotransferase</keyword>
<keyword id="KW-0368">Histidine biosynthesis</keyword>
<keyword id="KW-0378">Hydrolase</keyword>
<keyword id="KW-0456">Lyase</keyword>
<keyword id="KW-1185">Reference proteome</keyword>
<feature type="chain" id="PRO_0000152465" description="Imidazole glycerol phosphate synthase subunit HisH">
    <location>
        <begin position="1"/>
        <end position="190"/>
    </location>
</feature>
<feature type="domain" description="Glutamine amidotransferase type-1" evidence="1">
    <location>
        <begin position="2"/>
        <end position="190"/>
    </location>
</feature>
<feature type="active site" description="Nucleophile" evidence="1">
    <location>
        <position position="73"/>
    </location>
</feature>
<feature type="active site" evidence="1">
    <location>
        <position position="169"/>
    </location>
</feature>
<feature type="active site" evidence="1">
    <location>
        <position position="171"/>
    </location>
</feature>
<evidence type="ECO:0000255" key="1">
    <source>
        <dbReference type="HAMAP-Rule" id="MF_00278"/>
    </source>
</evidence>